<accession>Q887D9</accession>
<proteinExistence type="inferred from homology"/>
<dbReference type="EC" id="3.5.1.49" evidence="1"/>
<dbReference type="EMBL" id="AE016853">
    <property type="protein sequence ID" value="AAO54879.1"/>
    <property type="molecule type" value="Genomic_DNA"/>
</dbReference>
<dbReference type="RefSeq" id="NP_791184.1">
    <property type="nucleotide sequence ID" value="NC_004578.1"/>
</dbReference>
<dbReference type="RefSeq" id="WP_011103524.1">
    <property type="nucleotide sequence ID" value="NC_004578.1"/>
</dbReference>
<dbReference type="SMR" id="Q887D9"/>
<dbReference type="STRING" id="223283.PSPTO_1357"/>
<dbReference type="GeneID" id="1182993"/>
<dbReference type="KEGG" id="pst:PSPTO_1357"/>
<dbReference type="PATRIC" id="fig|223283.9.peg.1379"/>
<dbReference type="eggNOG" id="COG0388">
    <property type="taxonomic scope" value="Bacteria"/>
</dbReference>
<dbReference type="HOGENOM" id="CLU_071797_0_0_6"/>
<dbReference type="OrthoDB" id="9803803at2"/>
<dbReference type="PhylomeDB" id="Q887D9"/>
<dbReference type="Proteomes" id="UP000002515">
    <property type="component" value="Chromosome"/>
</dbReference>
<dbReference type="GO" id="GO:0004328">
    <property type="term" value="F:formamidase activity"/>
    <property type="evidence" value="ECO:0007669"/>
    <property type="project" value="UniProtKB-UniRule"/>
</dbReference>
<dbReference type="GO" id="GO:0050126">
    <property type="term" value="F:N-carbamoylputrescine amidase activity"/>
    <property type="evidence" value="ECO:0007669"/>
    <property type="project" value="TreeGrafter"/>
</dbReference>
<dbReference type="GO" id="GO:0033388">
    <property type="term" value="P:putrescine biosynthetic process from arginine"/>
    <property type="evidence" value="ECO:0007669"/>
    <property type="project" value="TreeGrafter"/>
</dbReference>
<dbReference type="CDD" id="cd07565">
    <property type="entry name" value="aliphatic_amidase"/>
    <property type="match status" value="1"/>
</dbReference>
<dbReference type="FunFam" id="3.60.110.10:FF:000022">
    <property type="entry name" value="Formamidase"/>
    <property type="match status" value="1"/>
</dbReference>
<dbReference type="Gene3D" id="3.60.110.10">
    <property type="entry name" value="Carbon-nitrogen hydrolase"/>
    <property type="match status" value="1"/>
</dbReference>
<dbReference type="HAMAP" id="MF_01243">
    <property type="entry name" value="Formamidase"/>
    <property type="match status" value="1"/>
</dbReference>
<dbReference type="InterPro" id="IPR050345">
    <property type="entry name" value="Aliph_Amidase/BUP"/>
</dbReference>
<dbReference type="InterPro" id="IPR003010">
    <property type="entry name" value="C-N_Hydrolase"/>
</dbReference>
<dbReference type="InterPro" id="IPR036526">
    <property type="entry name" value="C-N_Hydrolase_sf"/>
</dbReference>
<dbReference type="InterPro" id="IPR022843">
    <property type="entry name" value="Formamidase"/>
</dbReference>
<dbReference type="NCBIfam" id="NF009803">
    <property type="entry name" value="PRK13287.1"/>
    <property type="match status" value="1"/>
</dbReference>
<dbReference type="PANTHER" id="PTHR43674:SF15">
    <property type="entry name" value="FORMAMIDASE"/>
    <property type="match status" value="1"/>
</dbReference>
<dbReference type="PANTHER" id="PTHR43674">
    <property type="entry name" value="NITRILASE C965.09-RELATED"/>
    <property type="match status" value="1"/>
</dbReference>
<dbReference type="Pfam" id="PF00795">
    <property type="entry name" value="CN_hydrolase"/>
    <property type="match status" value="1"/>
</dbReference>
<dbReference type="SUPFAM" id="SSF56317">
    <property type="entry name" value="Carbon-nitrogen hydrolase"/>
    <property type="match status" value="1"/>
</dbReference>
<dbReference type="PROSITE" id="PS50263">
    <property type="entry name" value="CN_HYDROLASE"/>
    <property type="match status" value="1"/>
</dbReference>
<name>AMIF_PSESM</name>
<feature type="chain" id="PRO_0000204067" description="Formamidase">
    <location>
        <begin position="1"/>
        <end position="338"/>
    </location>
</feature>
<feature type="domain" description="CN hydrolase" evidence="2">
    <location>
        <begin position="15"/>
        <end position="257"/>
    </location>
</feature>
<feature type="active site" description="Proton acceptor" evidence="1">
    <location>
        <position position="61"/>
    </location>
</feature>
<feature type="active site" description="Proton donor" evidence="1">
    <location>
        <position position="130"/>
    </location>
</feature>
<feature type="active site" description="Nucleophile" evidence="1">
    <location>
        <position position="163"/>
    </location>
</feature>
<sequence length="338" mass="37253">MASGLGGLNKSPNGVVIGLAQLALPDPHTREALWAQTQKVVGMVAKARRSNPGMDLIVFPEYSLHGLSMSTAPEIMCSLDGPEVVALREACKEHRIWGCFSIMEANPQGNPFNSSLIVDDLGEIRLYYRKLHPWVPVEPWEPGDLGIPVCDGPRGSTLALIICHDGMFPEMARECAYKGADIMLRTAGYTAPIRHSWKITNQSNAFTNLMQTASVCMCGSDGTFDSMGEAMFVDFDGTIMAEGGGRADEIVCCELRPDLVREARVHWGVENNIYQFGHRGYVAVKGGARDCPYTYMRDLTAGQYRLPWENDVVHTDGRSCGFATPEREFKPTPSSWKE</sequence>
<reference key="1">
    <citation type="journal article" date="2003" name="Proc. Natl. Acad. Sci. U.S.A.">
        <title>The complete genome sequence of the Arabidopsis and tomato pathogen Pseudomonas syringae pv. tomato DC3000.</title>
        <authorList>
            <person name="Buell C.R."/>
            <person name="Joardar V."/>
            <person name="Lindeberg M."/>
            <person name="Selengut J."/>
            <person name="Paulsen I.T."/>
            <person name="Gwinn M.L."/>
            <person name="Dodson R.J."/>
            <person name="DeBoy R.T."/>
            <person name="Durkin A.S."/>
            <person name="Kolonay J.F."/>
            <person name="Madupu R."/>
            <person name="Daugherty S.C."/>
            <person name="Brinkac L.M."/>
            <person name="Beanan M.J."/>
            <person name="Haft D.H."/>
            <person name="Nelson W.C."/>
            <person name="Davidsen T.M."/>
            <person name="Zafar N."/>
            <person name="Zhou L."/>
            <person name="Liu J."/>
            <person name="Yuan Q."/>
            <person name="Khouri H.M."/>
            <person name="Fedorova N.B."/>
            <person name="Tran B."/>
            <person name="Russell D."/>
            <person name="Berry K.J."/>
            <person name="Utterback T.R."/>
            <person name="Van Aken S.E."/>
            <person name="Feldblyum T.V."/>
            <person name="D'Ascenzo M."/>
            <person name="Deng W.-L."/>
            <person name="Ramos A.R."/>
            <person name="Alfano J.R."/>
            <person name="Cartinhour S."/>
            <person name="Chatterjee A.K."/>
            <person name="Delaney T.P."/>
            <person name="Lazarowitz S.G."/>
            <person name="Martin G.B."/>
            <person name="Schneider D.J."/>
            <person name="Tang X."/>
            <person name="Bender C.L."/>
            <person name="White O."/>
            <person name="Fraser C.M."/>
            <person name="Collmer A."/>
        </authorList>
    </citation>
    <scope>NUCLEOTIDE SEQUENCE [LARGE SCALE GENOMIC DNA]</scope>
    <source>
        <strain>ATCC BAA-871 / DC3000</strain>
    </source>
</reference>
<evidence type="ECO:0000255" key="1">
    <source>
        <dbReference type="HAMAP-Rule" id="MF_01243"/>
    </source>
</evidence>
<evidence type="ECO:0000255" key="2">
    <source>
        <dbReference type="PROSITE-ProRule" id="PRU00054"/>
    </source>
</evidence>
<gene>
    <name evidence="1" type="primary">amiF</name>
    <name type="synonym">amiE</name>
    <name type="ordered locus">PSPTO_1357</name>
</gene>
<comment type="function">
    <text evidence="1">Is an aliphatic amidase with a restricted substrate specificity, as it only hydrolyzes formamide.</text>
</comment>
<comment type="catalytic activity">
    <reaction evidence="1">
        <text>formamide + H2O = formate + NH4(+)</text>
        <dbReference type="Rhea" id="RHEA:21948"/>
        <dbReference type="ChEBI" id="CHEBI:15377"/>
        <dbReference type="ChEBI" id="CHEBI:15740"/>
        <dbReference type="ChEBI" id="CHEBI:16397"/>
        <dbReference type="ChEBI" id="CHEBI:28938"/>
        <dbReference type="EC" id="3.5.1.49"/>
    </reaction>
</comment>
<comment type="similarity">
    <text evidence="1">Belongs to the carbon-nitrogen hydrolase superfamily. Aliphatic amidase family.</text>
</comment>
<keyword id="KW-0378">Hydrolase</keyword>
<keyword id="KW-1185">Reference proteome</keyword>
<organism>
    <name type="scientific">Pseudomonas syringae pv. tomato (strain ATCC BAA-871 / DC3000)</name>
    <dbReference type="NCBI Taxonomy" id="223283"/>
    <lineage>
        <taxon>Bacteria</taxon>
        <taxon>Pseudomonadati</taxon>
        <taxon>Pseudomonadota</taxon>
        <taxon>Gammaproteobacteria</taxon>
        <taxon>Pseudomonadales</taxon>
        <taxon>Pseudomonadaceae</taxon>
        <taxon>Pseudomonas</taxon>
    </lineage>
</organism>
<protein>
    <recommendedName>
        <fullName evidence="1">Formamidase</fullName>
        <ecNumber evidence="1">3.5.1.49</ecNumber>
    </recommendedName>
    <alternativeName>
        <fullName evidence="1">Formamide amidohydrolase</fullName>
    </alternativeName>
</protein>